<comment type="function">
    <text>Elicits an increase in arterial blood pressure.</text>
</comment>
<comment type="subcellular location">
    <subcellularLocation>
        <location>Secreted</location>
    </subcellularLocation>
</comment>
<comment type="similarity">
    <text evidence="2">Belongs to the NPY family.</text>
</comment>
<dbReference type="PIR" id="A60022">
    <property type="entry name" value="PCDFY"/>
</dbReference>
<dbReference type="SMR" id="P69096"/>
<dbReference type="GO" id="GO:0005615">
    <property type="term" value="C:extracellular space"/>
    <property type="evidence" value="ECO:0007669"/>
    <property type="project" value="TreeGrafter"/>
</dbReference>
<dbReference type="GO" id="GO:0005184">
    <property type="term" value="F:neuropeptide hormone activity"/>
    <property type="evidence" value="ECO:0007669"/>
    <property type="project" value="TreeGrafter"/>
</dbReference>
<dbReference type="GO" id="GO:0031841">
    <property type="term" value="F:neuropeptide Y receptor binding"/>
    <property type="evidence" value="ECO:0007669"/>
    <property type="project" value="TreeGrafter"/>
</dbReference>
<dbReference type="GO" id="GO:0007631">
    <property type="term" value="P:feeding behavior"/>
    <property type="evidence" value="ECO:0007669"/>
    <property type="project" value="TreeGrafter"/>
</dbReference>
<dbReference type="GO" id="GO:0007218">
    <property type="term" value="P:neuropeptide signaling pathway"/>
    <property type="evidence" value="ECO:0007669"/>
    <property type="project" value="TreeGrafter"/>
</dbReference>
<dbReference type="CDD" id="cd00126">
    <property type="entry name" value="PAH"/>
    <property type="match status" value="1"/>
</dbReference>
<dbReference type="Gene3D" id="6.10.250.900">
    <property type="match status" value="1"/>
</dbReference>
<dbReference type="InterPro" id="IPR001955">
    <property type="entry name" value="Pancreatic_hormone-like"/>
</dbReference>
<dbReference type="InterPro" id="IPR020392">
    <property type="entry name" value="Pancreatic_hormone-like_CS"/>
</dbReference>
<dbReference type="PANTHER" id="PTHR10533">
    <property type="entry name" value="NEUROPEPTIDE Y/PANCREATIC HORMONE/PEPTIDE YY"/>
    <property type="match status" value="1"/>
</dbReference>
<dbReference type="PANTHER" id="PTHR10533:SF14">
    <property type="entry name" value="PEPTIDE YY-RELATED"/>
    <property type="match status" value="1"/>
</dbReference>
<dbReference type="Pfam" id="PF00159">
    <property type="entry name" value="Hormone_3"/>
    <property type="match status" value="1"/>
</dbReference>
<dbReference type="PRINTS" id="PR00278">
    <property type="entry name" value="PANCHORMONE"/>
</dbReference>
<dbReference type="SMART" id="SM00309">
    <property type="entry name" value="PAH"/>
    <property type="match status" value="1"/>
</dbReference>
<dbReference type="PROSITE" id="PS00265">
    <property type="entry name" value="PANCREATIC_HORMONE_1"/>
    <property type="match status" value="1"/>
</dbReference>
<dbReference type="PROSITE" id="PS50276">
    <property type="entry name" value="PANCREATIC_HORMONE_2"/>
    <property type="match status" value="1"/>
</dbReference>
<protein>
    <recommendedName>
        <fullName>Peptide YY-like</fullName>
        <shortName>PYY</shortName>
    </recommendedName>
    <alternativeName>
        <fullName>Neuropeptide Y-related peptide</fullName>
    </alternativeName>
</protein>
<reference key="1">
    <citation type="journal article" date="1991" name="Regul. Pept.">
        <title>Isolation and primary structure of the peptide Y from the pancreas of the spiny dogfish, Squalus acanthias.</title>
        <authorList>
            <person name="Pan J.-Z."/>
            <person name="Shaw C."/>
            <person name="Halton D.W."/>
            <person name="Thim L."/>
            <person name="Johnston C.F."/>
            <person name="Fairweather I."/>
            <person name="Buchanan K.D."/>
        </authorList>
    </citation>
    <scope>PROTEIN SEQUENCE</scope>
    <scope>AMIDATION AT TYR-36</scope>
    <source>
        <tissue>Pancreas</tissue>
    </source>
</reference>
<keyword id="KW-0027">Amidation</keyword>
<keyword id="KW-0903">Direct protein sequencing</keyword>
<keyword id="KW-0372">Hormone</keyword>
<keyword id="KW-0964">Secreted</keyword>
<evidence type="ECO:0000269" key="1">
    <source ref="1"/>
</evidence>
<evidence type="ECO:0000305" key="2"/>
<organism>
    <name type="scientific">Squalus acanthias</name>
    <name type="common">Spiny dogfish</name>
    <dbReference type="NCBI Taxonomy" id="7797"/>
    <lineage>
        <taxon>Eukaryota</taxon>
        <taxon>Metazoa</taxon>
        <taxon>Chordata</taxon>
        <taxon>Craniata</taxon>
        <taxon>Vertebrata</taxon>
        <taxon>Chondrichthyes</taxon>
        <taxon>Elasmobranchii</taxon>
        <taxon>Squalomorphii</taxon>
        <taxon>Squaliformes</taxon>
        <taxon>Squalidae</taxon>
        <taxon>Squalus</taxon>
    </lineage>
</organism>
<sequence>YPPKPENPGEDAPPEELAKYYSALRHYINLITRQRY</sequence>
<name>PYY_SQUAC</name>
<feature type="peptide" id="PRO_0000044821" description="Peptide YY-like">
    <location>
        <begin position="1"/>
        <end position="36"/>
    </location>
</feature>
<feature type="modified residue" description="Tyrosine amide" evidence="1">
    <location>
        <position position="36"/>
    </location>
</feature>
<proteinExistence type="evidence at protein level"/>
<accession>P69096</accession>
<accession>P09473</accession>